<keyword id="KW-1003">Cell membrane</keyword>
<keyword id="KW-0186">Copper</keyword>
<keyword id="KW-0325">Glycoprotein</keyword>
<keyword id="KW-0406">Ion transport</keyword>
<keyword id="KW-0408">Iron</keyword>
<keyword id="KW-0410">Iron transport</keyword>
<keyword id="KW-0472">Membrane</keyword>
<keyword id="KW-0479">Metal-binding</keyword>
<keyword id="KW-0560">Oxidoreductase</keyword>
<keyword id="KW-1185">Reference proteome</keyword>
<keyword id="KW-0677">Repeat</keyword>
<keyword id="KW-0732">Signal</keyword>
<keyword id="KW-0812">Transmembrane</keyword>
<keyword id="KW-1133">Transmembrane helix</keyword>
<keyword id="KW-0813">Transport</keyword>
<gene>
    <name type="primary">fio1</name>
    <name type="ORF">SPAC1F7.08</name>
</gene>
<proteinExistence type="inferred from homology"/>
<dbReference type="EC" id="1.-.-.-"/>
<dbReference type="EMBL" id="CU329670">
    <property type="protein sequence ID" value="CAA91955.1"/>
    <property type="molecule type" value="Genomic_DNA"/>
</dbReference>
<dbReference type="PIR" id="S62580">
    <property type="entry name" value="S62580"/>
</dbReference>
<dbReference type="RefSeq" id="NP_594494.1">
    <property type="nucleotide sequence ID" value="NM_001019923.2"/>
</dbReference>
<dbReference type="SMR" id="Q09920"/>
<dbReference type="BioGRID" id="278057">
    <property type="interactions" value="21"/>
</dbReference>
<dbReference type="FunCoup" id="Q09920">
    <property type="interactions" value="59"/>
</dbReference>
<dbReference type="STRING" id="284812.Q09920"/>
<dbReference type="TCDB" id="2.A.108.1.5">
    <property type="family name" value="the iron/lead transporter (ilt) family"/>
</dbReference>
<dbReference type="GlyCosmos" id="Q09920">
    <property type="glycosylation" value="13 sites, No reported glycans"/>
</dbReference>
<dbReference type="iPTMnet" id="Q09920"/>
<dbReference type="PaxDb" id="4896-SPAC1F7.08.1"/>
<dbReference type="EnsemblFungi" id="SPAC1F7.08.1">
    <property type="protein sequence ID" value="SPAC1F7.08.1:pep"/>
    <property type="gene ID" value="SPAC1F7.08"/>
</dbReference>
<dbReference type="GeneID" id="2541558"/>
<dbReference type="KEGG" id="spo:2541558"/>
<dbReference type="PomBase" id="SPAC1F7.08">
    <property type="gene designation" value="fio1"/>
</dbReference>
<dbReference type="VEuPathDB" id="FungiDB:SPAC1F7.08"/>
<dbReference type="eggNOG" id="KOG1263">
    <property type="taxonomic scope" value="Eukaryota"/>
</dbReference>
<dbReference type="HOGENOM" id="CLU_006504_7_3_1"/>
<dbReference type="InParanoid" id="Q09920"/>
<dbReference type="OMA" id="WHSHTEH"/>
<dbReference type="PhylomeDB" id="Q09920"/>
<dbReference type="PRO" id="PR:Q09920"/>
<dbReference type="Proteomes" id="UP000002485">
    <property type="component" value="Chromosome I"/>
</dbReference>
<dbReference type="GO" id="GO:0033573">
    <property type="term" value="C:high-affinity iron permease complex"/>
    <property type="evidence" value="ECO:0000316"/>
    <property type="project" value="PomBase"/>
</dbReference>
<dbReference type="GO" id="GO:0005507">
    <property type="term" value="F:copper ion binding"/>
    <property type="evidence" value="ECO:0007669"/>
    <property type="project" value="InterPro"/>
</dbReference>
<dbReference type="GO" id="GO:0004322">
    <property type="term" value="F:ferroxidase activity"/>
    <property type="evidence" value="ECO:0000315"/>
    <property type="project" value="PomBase"/>
</dbReference>
<dbReference type="GO" id="GO:0010106">
    <property type="term" value="P:cellular response to iron ion starvation"/>
    <property type="evidence" value="ECO:0000318"/>
    <property type="project" value="GO_Central"/>
</dbReference>
<dbReference type="GO" id="GO:0033215">
    <property type="term" value="P:reductive iron assimilation"/>
    <property type="evidence" value="ECO:0000315"/>
    <property type="project" value="PomBase"/>
</dbReference>
<dbReference type="CDD" id="cd13877">
    <property type="entry name" value="CuRO_2_Fet3p_like"/>
    <property type="match status" value="1"/>
</dbReference>
<dbReference type="CDD" id="cd13899">
    <property type="entry name" value="CuRO_3_Fet3p"/>
    <property type="match status" value="1"/>
</dbReference>
<dbReference type="Gene3D" id="2.60.40.420">
    <property type="entry name" value="Cupredoxins - blue copper proteins"/>
    <property type="match status" value="3"/>
</dbReference>
<dbReference type="InterPro" id="IPR011707">
    <property type="entry name" value="Cu-oxidase-like_N"/>
</dbReference>
<dbReference type="InterPro" id="IPR001117">
    <property type="entry name" value="Cu-oxidase_2nd"/>
</dbReference>
<dbReference type="InterPro" id="IPR011706">
    <property type="entry name" value="Cu-oxidase_C"/>
</dbReference>
<dbReference type="InterPro" id="IPR045087">
    <property type="entry name" value="Cu-oxidase_fam"/>
</dbReference>
<dbReference type="InterPro" id="IPR033138">
    <property type="entry name" value="Cu_oxidase_CS"/>
</dbReference>
<dbReference type="InterPro" id="IPR002355">
    <property type="entry name" value="Cu_oxidase_Cu_BS"/>
</dbReference>
<dbReference type="InterPro" id="IPR008972">
    <property type="entry name" value="Cupredoxin"/>
</dbReference>
<dbReference type="InterPro" id="IPR044130">
    <property type="entry name" value="CuRO_2_Fet3-like"/>
</dbReference>
<dbReference type="PANTHER" id="PTHR11709:SF361">
    <property type="entry name" value="IRON TRANSPORT MULTICOPPER OXIDASE FET3"/>
    <property type="match status" value="1"/>
</dbReference>
<dbReference type="PANTHER" id="PTHR11709">
    <property type="entry name" value="MULTI-COPPER OXIDASE"/>
    <property type="match status" value="1"/>
</dbReference>
<dbReference type="Pfam" id="PF00394">
    <property type="entry name" value="Cu-oxidase"/>
    <property type="match status" value="1"/>
</dbReference>
<dbReference type="Pfam" id="PF07731">
    <property type="entry name" value="Cu-oxidase_2"/>
    <property type="match status" value="1"/>
</dbReference>
<dbReference type="Pfam" id="PF07732">
    <property type="entry name" value="Cu-oxidase_3"/>
    <property type="match status" value="1"/>
</dbReference>
<dbReference type="SUPFAM" id="SSF49503">
    <property type="entry name" value="Cupredoxins"/>
    <property type="match status" value="3"/>
</dbReference>
<dbReference type="PROSITE" id="PS00079">
    <property type="entry name" value="MULTICOPPER_OXIDASE1"/>
    <property type="match status" value="2"/>
</dbReference>
<dbReference type="PROSITE" id="PS00080">
    <property type="entry name" value="MULTICOPPER_OXIDASE2"/>
    <property type="match status" value="1"/>
</dbReference>
<sequence length="622" mass="69908">MNKFFSFPILGLLLTCVRFVVAKERLFEWNVTDVYDVDPDGSGNSRWVIGVNNKWPIDPLVVDYGDQVIIKMTNSLANNRTTSLHSHGLFQKFTPYMDGVPQSTQCEIPPGATFYYNYTALQNGTYWVHSHDMSQYPDGLRTPFIINALEEPYDYDEEYIISMTDWYYTPFNILVPDEFKTWKNPTGAEPVPDTGLFNDTANATFAMEPGKTYRLRFINIGAFNNYDVMIEDHNMTIIEVDGEYTEPQEVSSIHLTVAQRYSVLVTAKNSTDRNYAITAYMDESLFDTIPDNYNPNVTAWLSYNSDASYDLGPDIDEIDSYDDAELNPLYSWDVTESNHSINIWFDFFTLGDGANYAEINDSSYVFPKVPSIMIANSTNVDGYNLEPVTYGPYTNAYIFEYGDVVDVIIDNHDTGKHPFHLHGHTFQVLERGEENAGLYSDQESHTYYDNPMRRDTVEIEPGSFIVIRFIADNPGAWVIHCHIEWHMESGLLATFIEAPEMIPSISSPDFVKEQCMLDGVPTIGNGAGNYKNISDLSGAPSPPGEMPAGWTSKAIGTMAACVISACIGMGSIIFYGASIHPVPTEELDENDDLQEAALENAAMFLDTDKAVEKVVEGKDEIK</sequence>
<name>FIO1_SCHPO</name>
<organism>
    <name type="scientific">Schizosaccharomyces pombe (strain 972 / ATCC 24843)</name>
    <name type="common">Fission yeast</name>
    <dbReference type="NCBI Taxonomy" id="284812"/>
    <lineage>
        <taxon>Eukaryota</taxon>
        <taxon>Fungi</taxon>
        <taxon>Dikarya</taxon>
        <taxon>Ascomycota</taxon>
        <taxon>Taphrinomycotina</taxon>
        <taxon>Schizosaccharomycetes</taxon>
        <taxon>Schizosaccharomycetales</taxon>
        <taxon>Schizosaccharomycetaceae</taxon>
        <taxon>Schizosaccharomyces</taxon>
    </lineage>
</organism>
<feature type="signal peptide" evidence="2">
    <location>
        <begin position="1"/>
        <end position="22"/>
    </location>
</feature>
<feature type="chain" id="PRO_0000002965" description="Iron transport multicopper oxidase fio1">
    <location>
        <begin position="23"/>
        <end position="622"/>
    </location>
</feature>
<feature type="topological domain" description="Extracellular" evidence="2">
    <location>
        <begin position="23"/>
        <end position="553"/>
    </location>
</feature>
<feature type="transmembrane region" description="Helical" evidence="2">
    <location>
        <begin position="554"/>
        <end position="574"/>
    </location>
</feature>
<feature type="topological domain" description="Cytoplasmic" evidence="2">
    <location>
        <begin position="575"/>
        <end position="622"/>
    </location>
</feature>
<feature type="domain" description="Plastocyanin-like 1">
    <location>
        <begin position="49"/>
        <end position="147"/>
    </location>
</feature>
<feature type="domain" description="Plastocyanin-like 2">
    <location>
        <begin position="194"/>
        <end position="304"/>
    </location>
</feature>
<feature type="domain" description="Plastocyanin-like 3">
    <location>
        <begin position="386"/>
        <end position="498"/>
    </location>
</feature>
<feature type="binding site" description="type 2 copper site" evidence="1">
    <location>
        <position position="85"/>
    </location>
    <ligand>
        <name>Cu cation</name>
        <dbReference type="ChEBI" id="CHEBI:23378"/>
        <label>1</label>
    </ligand>
</feature>
<feature type="binding site" description="type 3 copper site" evidence="1">
    <location>
        <position position="87"/>
    </location>
    <ligand>
        <name>Cu cation</name>
        <dbReference type="ChEBI" id="CHEBI:23378"/>
        <label>2</label>
    </ligand>
</feature>
<feature type="binding site" description="type 3 copper site" evidence="1">
    <location>
        <position position="129"/>
    </location>
    <ligand>
        <name>Cu cation</name>
        <dbReference type="ChEBI" id="CHEBI:23378"/>
        <label>2</label>
    </ligand>
</feature>
<feature type="binding site" description="type 3 copper site" evidence="1">
    <location>
        <position position="131"/>
    </location>
    <ligand>
        <name>Cu cation</name>
        <dbReference type="ChEBI" id="CHEBI:23378"/>
        <label>3</label>
    </ligand>
</feature>
<feature type="binding site" description="type 1 copper site" evidence="1">
    <location>
        <position position="417"/>
    </location>
    <ligand>
        <name>Cu cation</name>
        <dbReference type="ChEBI" id="CHEBI:23378"/>
        <label>4</label>
    </ligand>
</feature>
<feature type="binding site" description="type 2 copper site" evidence="1">
    <location>
        <position position="420"/>
    </location>
    <ligand>
        <name>Cu cation</name>
        <dbReference type="ChEBI" id="CHEBI:23378"/>
        <label>1</label>
    </ligand>
</feature>
<feature type="binding site" description="type 3 copper site" evidence="1">
    <location>
        <position position="422"/>
    </location>
    <ligand>
        <name>Cu cation</name>
        <dbReference type="ChEBI" id="CHEBI:23378"/>
        <label>3</label>
    </ligand>
</feature>
<feature type="binding site" description="type 3 copper site" evidence="1">
    <location>
        <position position="480"/>
    </location>
    <ligand>
        <name>Cu cation</name>
        <dbReference type="ChEBI" id="CHEBI:23378"/>
        <label>3</label>
    </ligand>
</feature>
<feature type="binding site" description="type 1 copper site" evidence="1">
    <location>
        <position position="481"/>
    </location>
    <ligand>
        <name>Cu cation</name>
        <dbReference type="ChEBI" id="CHEBI:23378"/>
        <label>4</label>
    </ligand>
</feature>
<feature type="binding site" description="type 3 copper site" evidence="1">
    <location>
        <position position="482"/>
    </location>
    <ligand>
        <name>Cu cation</name>
        <dbReference type="ChEBI" id="CHEBI:23378"/>
        <label>2</label>
    </ligand>
</feature>
<feature type="binding site" description="type 1 copper site" evidence="1">
    <location>
        <position position="486"/>
    </location>
    <ligand>
        <name>Cu cation</name>
        <dbReference type="ChEBI" id="CHEBI:23378"/>
        <label>4</label>
    </ligand>
</feature>
<feature type="glycosylation site" description="N-linked (GlcNAc...) asparagine" evidence="2">
    <location>
        <position position="30"/>
    </location>
</feature>
<feature type="glycosylation site" description="N-linked (GlcNAc...) asparagine" evidence="2">
    <location>
        <position position="79"/>
    </location>
</feature>
<feature type="glycosylation site" description="N-linked (GlcNAc...) asparagine" evidence="2">
    <location>
        <position position="117"/>
    </location>
</feature>
<feature type="glycosylation site" description="N-linked (GlcNAc...) asparagine" evidence="2">
    <location>
        <position position="123"/>
    </location>
</feature>
<feature type="glycosylation site" description="N-linked (GlcNAc...) asparagine" evidence="2">
    <location>
        <position position="198"/>
    </location>
</feature>
<feature type="glycosylation site" description="N-linked (GlcNAc...) asparagine" evidence="2">
    <location>
        <position position="202"/>
    </location>
</feature>
<feature type="glycosylation site" description="N-linked (GlcNAc...) asparagine" evidence="2">
    <location>
        <position position="234"/>
    </location>
</feature>
<feature type="glycosylation site" description="N-linked (GlcNAc...) asparagine" evidence="2">
    <location>
        <position position="269"/>
    </location>
</feature>
<feature type="glycosylation site" description="N-linked (GlcNAc...) asparagine" evidence="2">
    <location>
        <position position="296"/>
    </location>
</feature>
<feature type="glycosylation site" description="N-linked (GlcNAc...) asparagine" evidence="2">
    <location>
        <position position="338"/>
    </location>
</feature>
<feature type="glycosylation site" description="N-linked (GlcNAc...) asparagine" evidence="2">
    <location>
        <position position="360"/>
    </location>
</feature>
<feature type="glycosylation site" description="N-linked (GlcNAc...) asparagine" evidence="2">
    <location>
        <position position="376"/>
    </location>
</feature>
<feature type="glycosylation site" description="N-linked (GlcNAc...) asparagine" evidence="2">
    <location>
        <position position="532"/>
    </location>
</feature>
<evidence type="ECO:0000250" key="1"/>
<evidence type="ECO:0000255" key="2"/>
<evidence type="ECO:0000269" key="3">
    <source>
    </source>
</evidence>
<evidence type="ECO:0000305" key="4"/>
<comment type="function">
    <text evidence="3">Could be an iron transport multicopper oxidase, which is required for Fe(2+) high affinity uptake. May be required to oxidize Fe(2+) and release it from the transporter. Essential component of copper-dependent iron transport.</text>
</comment>
<comment type="cofactor">
    <cofactor evidence="1">
        <name>Cu cation</name>
        <dbReference type="ChEBI" id="CHEBI:23378"/>
    </cofactor>
    <text evidence="1">Binds 4 Cu cations per monomer.</text>
</comment>
<comment type="subcellular location">
    <subcellularLocation>
        <location evidence="1">Cell membrane</location>
        <topology evidence="1">Single-pass type I membrane protein</topology>
        <orientation evidence="1">Extracellular side</orientation>
    </subcellularLocation>
</comment>
<comment type="similarity">
    <text evidence="4">Belongs to the multicopper oxidase family.</text>
</comment>
<accession>Q09920</accession>
<protein>
    <recommendedName>
        <fullName>Iron transport multicopper oxidase fio1</fullName>
        <ecNumber>1.-.-.-</ecNumber>
    </recommendedName>
</protein>
<reference key="1">
    <citation type="journal article" date="2002" name="Nature">
        <title>The genome sequence of Schizosaccharomyces pombe.</title>
        <authorList>
            <person name="Wood V."/>
            <person name="Gwilliam R."/>
            <person name="Rajandream M.A."/>
            <person name="Lyne M.H."/>
            <person name="Lyne R."/>
            <person name="Stewart A."/>
            <person name="Sgouros J.G."/>
            <person name="Peat N."/>
            <person name="Hayles J."/>
            <person name="Baker S.G."/>
            <person name="Basham D."/>
            <person name="Bowman S."/>
            <person name="Brooks K."/>
            <person name="Brown D."/>
            <person name="Brown S."/>
            <person name="Chillingworth T."/>
            <person name="Churcher C.M."/>
            <person name="Collins M."/>
            <person name="Connor R."/>
            <person name="Cronin A."/>
            <person name="Davis P."/>
            <person name="Feltwell T."/>
            <person name="Fraser A."/>
            <person name="Gentles S."/>
            <person name="Goble A."/>
            <person name="Hamlin N."/>
            <person name="Harris D.E."/>
            <person name="Hidalgo J."/>
            <person name="Hodgson G."/>
            <person name="Holroyd S."/>
            <person name="Hornsby T."/>
            <person name="Howarth S."/>
            <person name="Huckle E.J."/>
            <person name="Hunt S."/>
            <person name="Jagels K."/>
            <person name="James K.D."/>
            <person name="Jones L."/>
            <person name="Jones M."/>
            <person name="Leather S."/>
            <person name="McDonald S."/>
            <person name="McLean J."/>
            <person name="Mooney P."/>
            <person name="Moule S."/>
            <person name="Mungall K.L."/>
            <person name="Murphy L.D."/>
            <person name="Niblett D."/>
            <person name="Odell C."/>
            <person name="Oliver K."/>
            <person name="O'Neil S."/>
            <person name="Pearson D."/>
            <person name="Quail M.A."/>
            <person name="Rabbinowitsch E."/>
            <person name="Rutherford K.M."/>
            <person name="Rutter S."/>
            <person name="Saunders D."/>
            <person name="Seeger K."/>
            <person name="Sharp S."/>
            <person name="Skelton J."/>
            <person name="Simmonds M.N."/>
            <person name="Squares R."/>
            <person name="Squares S."/>
            <person name="Stevens K."/>
            <person name="Taylor K."/>
            <person name="Taylor R.G."/>
            <person name="Tivey A."/>
            <person name="Walsh S.V."/>
            <person name="Warren T."/>
            <person name="Whitehead S."/>
            <person name="Woodward J.R."/>
            <person name="Volckaert G."/>
            <person name="Aert R."/>
            <person name="Robben J."/>
            <person name="Grymonprez B."/>
            <person name="Weltjens I."/>
            <person name="Vanstreels E."/>
            <person name="Rieger M."/>
            <person name="Schaefer M."/>
            <person name="Mueller-Auer S."/>
            <person name="Gabel C."/>
            <person name="Fuchs M."/>
            <person name="Duesterhoeft A."/>
            <person name="Fritzc C."/>
            <person name="Holzer E."/>
            <person name="Moestl D."/>
            <person name="Hilbert H."/>
            <person name="Borzym K."/>
            <person name="Langer I."/>
            <person name="Beck A."/>
            <person name="Lehrach H."/>
            <person name="Reinhardt R."/>
            <person name="Pohl T.M."/>
            <person name="Eger P."/>
            <person name="Zimmermann W."/>
            <person name="Wedler H."/>
            <person name="Wambutt R."/>
            <person name="Purnelle B."/>
            <person name="Goffeau A."/>
            <person name="Cadieu E."/>
            <person name="Dreano S."/>
            <person name="Gloux S."/>
            <person name="Lelaure V."/>
            <person name="Mottier S."/>
            <person name="Galibert F."/>
            <person name="Aves S.J."/>
            <person name="Xiang Z."/>
            <person name="Hunt C."/>
            <person name="Moore K."/>
            <person name="Hurst S.M."/>
            <person name="Lucas M."/>
            <person name="Rochet M."/>
            <person name="Gaillardin C."/>
            <person name="Tallada V.A."/>
            <person name="Garzon A."/>
            <person name="Thode G."/>
            <person name="Daga R.R."/>
            <person name="Cruzado L."/>
            <person name="Jimenez J."/>
            <person name="Sanchez M."/>
            <person name="del Rey F."/>
            <person name="Benito J."/>
            <person name="Dominguez A."/>
            <person name="Revuelta J.L."/>
            <person name="Moreno S."/>
            <person name="Armstrong J."/>
            <person name="Forsburg S.L."/>
            <person name="Cerutti L."/>
            <person name="Lowe T."/>
            <person name="McCombie W.R."/>
            <person name="Paulsen I."/>
            <person name="Potashkin J."/>
            <person name="Shpakovski G.V."/>
            <person name="Ussery D."/>
            <person name="Barrell B.G."/>
            <person name="Nurse P."/>
        </authorList>
    </citation>
    <scope>NUCLEOTIDE SEQUENCE [LARGE SCALE GENOMIC DNA]</scope>
    <source>
        <strain>972 / ATCC 24843</strain>
    </source>
</reference>
<reference key="2">
    <citation type="journal article" date="1997" name="J. Biol. Chem.">
        <title>An oxidase-permease-based iron transport system in Schizosaccharomyces pombe and its expression in Saccharomyces cerevisiae.</title>
        <authorList>
            <person name="Askwith C."/>
            <person name="Kaplan J."/>
        </authorList>
    </citation>
    <scope>FUNCTION</scope>
</reference>